<comment type="subcellular location">
    <subcellularLocation>
        <location evidence="1">Cell inner membrane</location>
        <topology evidence="1">Multi-pass membrane protein</topology>
    </subcellularLocation>
</comment>
<comment type="similarity">
    <text evidence="1">Belongs to the UPF0208 family.</text>
</comment>
<dbReference type="EMBL" id="CP000036">
    <property type="protein sequence ID" value="ABB66893.1"/>
    <property type="molecule type" value="Genomic_DNA"/>
</dbReference>
<dbReference type="RefSeq" id="WP_000106627.1">
    <property type="nucleotide sequence ID" value="NC_007613.1"/>
</dbReference>
<dbReference type="GeneID" id="93774879"/>
<dbReference type="KEGG" id="sbo:SBO_2330"/>
<dbReference type="HOGENOM" id="CLU_128746_0_0_6"/>
<dbReference type="Proteomes" id="UP000007067">
    <property type="component" value="Chromosome"/>
</dbReference>
<dbReference type="GO" id="GO:0005886">
    <property type="term" value="C:plasma membrane"/>
    <property type="evidence" value="ECO:0007669"/>
    <property type="project" value="UniProtKB-SubCell"/>
</dbReference>
<dbReference type="HAMAP" id="MF_01101">
    <property type="entry name" value="UPF0208"/>
    <property type="match status" value="1"/>
</dbReference>
<dbReference type="InterPro" id="IPR007334">
    <property type="entry name" value="UPF0208"/>
</dbReference>
<dbReference type="NCBIfam" id="NF002493">
    <property type="entry name" value="PRK01816.1"/>
    <property type="match status" value="1"/>
</dbReference>
<dbReference type="Pfam" id="PF04217">
    <property type="entry name" value="DUF412"/>
    <property type="match status" value="1"/>
</dbReference>
<sequence>MSTPDNRSVNFFSLFRRGQHYSKTWPLEKRLAPVFVENRVIKMTRYAIRFMPPIAVFTLCWQIALGGQLGPAVATALFALSLPMQGLWWLGKRSVTPLPPAILNWFYEVRGKLQESGQVLAPVEGKPDYQALADTLKRAFKQLDKTFLDDL</sequence>
<name>YFBV_SHIBS</name>
<evidence type="ECO:0000255" key="1">
    <source>
        <dbReference type="HAMAP-Rule" id="MF_01101"/>
    </source>
</evidence>
<proteinExistence type="inferred from homology"/>
<gene>
    <name evidence="1" type="primary">yfbV</name>
    <name type="ordered locus">SBO_2330</name>
</gene>
<keyword id="KW-0997">Cell inner membrane</keyword>
<keyword id="KW-1003">Cell membrane</keyword>
<keyword id="KW-0472">Membrane</keyword>
<keyword id="KW-0812">Transmembrane</keyword>
<keyword id="KW-1133">Transmembrane helix</keyword>
<protein>
    <recommendedName>
        <fullName evidence="1">UPF0208 membrane protein YfbV</fullName>
    </recommendedName>
</protein>
<organism>
    <name type="scientific">Shigella boydii serotype 4 (strain Sb227)</name>
    <dbReference type="NCBI Taxonomy" id="300268"/>
    <lineage>
        <taxon>Bacteria</taxon>
        <taxon>Pseudomonadati</taxon>
        <taxon>Pseudomonadota</taxon>
        <taxon>Gammaproteobacteria</taxon>
        <taxon>Enterobacterales</taxon>
        <taxon>Enterobacteriaceae</taxon>
        <taxon>Shigella</taxon>
    </lineage>
</organism>
<reference key="1">
    <citation type="journal article" date="2005" name="Nucleic Acids Res.">
        <title>Genome dynamics and diversity of Shigella species, the etiologic agents of bacillary dysentery.</title>
        <authorList>
            <person name="Yang F."/>
            <person name="Yang J."/>
            <person name="Zhang X."/>
            <person name="Chen L."/>
            <person name="Jiang Y."/>
            <person name="Yan Y."/>
            <person name="Tang X."/>
            <person name="Wang J."/>
            <person name="Xiong Z."/>
            <person name="Dong J."/>
            <person name="Xue Y."/>
            <person name="Zhu Y."/>
            <person name="Xu X."/>
            <person name="Sun L."/>
            <person name="Chen S."/>
            <person name="Nie H."/>
            <person name="Peng J."/>
            <person name="Xu J."/>
            <person name="Wang Y."/>
            <person name="Yuan Z."/>
            <person name="Wen Y."/>
            <person name="Yao Z."/>
            <person name="Shen Y."/>
            <person name="Qiang B."/>
            <person name="Hou Y."/>
            <person name="Yu J."/>
            <person name="Jin Q."/>
        </authorList>
    </citation>
    <scope>NUCLEOTIDE SEQUENCE [LARGE SCALE GENOMIC DNA]</scope>
    <source>
        <strain>Sb227</strain>
    </source>
</reference>
<feature type="chain" id="PRO_1000064979" description="UPF0208 membrane protein YfbV">
    <location>
        <begin position="1"/>
        <end position="151"/>
    </location>
</feature>
<feature type="transmembrane region" description="Helical" evidence="1">
    <location>
        <begin position="46"/>
        <end position="65"/>
    </location>
</feature>
<feature type="transmembrane region" description="Helical" evidence="1">
    <location>
        <begin position="69"/>
        <end position="91"/>
    </location>
</feature>
<accession>Q31YG5</accession>